<sequence>MTHQTHAYHMVNPSPWPLTGALSALLLTSGLIMWFHFNSFLLVIIGLTCMLLTMYQWWRDIVREGTFQGHHTPVVQKGLRYGMVLFIVSEVFFFLGFFWAFYHSSLAPTPELGGCWPPTGIHPLNPLEVPLLNTSILLASGVSITWAHHSLMEGNRKQMIQALSITILLGIYFTILQASEYYESSFTISDGVYGSTFFVATGFHGLHVIIGTTFLIVCLLRQFNFHFTSTHHFGFEAAAWYWHFVDVVWLFLYVSIYWWGS</sequence>
<accession>P92665</accession>
<geneLocation type="mitochondrion"/>
<keyword id="KW-0472">Membrane</keyword>
<keyword id="KW-0496">Mitochondrion</keyword>
<keyword id="KW-0999">Mitochondrion inner membrane</keyword>
<keyword id="KW-1278">Translocase</keyword>
<keyword id="KW-0812">Transmembrane</keyword>
<keyword id="KW-1133">Transmembrane helix</keyword>
<proteinExistence type="inferred from homology"/>
<comment type="function">
    <text evidence="2">Component of the cytochrome c oxidase, the last enzyme in the mitochondrial electron transport chain which drives oxidative phosphorylation. The respiratory chain contains 3 multisubunit complexes succinate dehydrogenase (complex II, CII), ubiquinol-cytochrome c oxidoreductase (cytochrome b-c1 complex, complex III, CIII) and cytochrome c oxidase (complex IV, CIV), that cooperate to transfer electrons derived from NADH and succinate to molecular oxygen, creating an electrochemical gradient over the inner membrane that drives transmembrane transport and the ATP synthase. Cytochrome c oxidase is the component of the respiratory chain that catalyzes the reduction of oxygen to water. Electrons originating from reduced cytochrome c in the intermembrane space (IMS) are transferred via the dinuclear copper A center (CU(A)) of subunit 2 and heme A of subunit 1 to the active site in subunit 1, a binuclear center (BNC) formed by heme A3 and copper B (CU(B)). The BNC reduces molecular oxygen to 2 water molecules using 4 electrons from cytochrome c in the IMS and 4 protons from the mitochondrial matrix.</text>
</comment>
<comment type="catalytic activity">
    <reaction evidence="2">
        <text>4 Fe(II)-[cytochrome c] + O2 + 8 H(+)(in) = 4 Fe(III)-[cytochrome c] + 2 H2O + 4 H(+)(out)</text>
        <dbReference type="Rhea" id="RHEA:11436"/>
        <dbReference type="Rhea" id="RHEA-COMP:10350"/>
        <dbReference type="Rhea" id="RHEA-COMP:14399"/>
        <dbReference type="ChEBI" id="CHEBI:15377"/>
        <dbReference type="ChEBI" id="CHEBI:15378"/>
        <dbReference type="ChEBI" id="CHEBI:15379"/>
        <dbReference type="ChEBI" id="CHEBI:29033"/>
        <dbReference type="ChEBI" id="CHEBI:29034"/>
        <dbReference type="EC" id="7.1.1.9"/>
    </reaction>
    <physiologicalReaction direction="left-to-right" evidence="2">
        <dbReference type="Rhea" id="RHEA:11437"/>
    </physiologicalReaction>
</comment>
<comment type="subunit">
    <text evidence="1">Component of the cytochrome c oxidase (complex IV, CIV), a multisubunit enzyme composed of 14 subunits. The complex is composed of a catalytic core of 3 subunits MT-CO1, MT-CO2 and MT-CO3, encoded in the mitochondrial DNA, and 11 supernumerary subunits COX4I, COX5A, COX5B, COX6A, COX6B, COX6C, COX7A, COX7B, COX7C, COX8 and NDUFA4, which are encoded in the nuclear genome. The complex exists as a monomer or a dimer and forms supercomplexes (SCs) in the inner mitochondrial membrane with NADH-ubiquinone oxidoreductase (complex I, CI) and ubiquinol-cytochrome c oxidoreductase (cytochrome b-c1 complex, complex III, CIII), resulting in different assemblies (supercomplex SCI(1)III(2)IV(1) and megacomplex MCI(2)III(2)IV(2)).</text>
</comment>
<comment type="subcellular location">
    <subcellularLocation>
        <location evidence="1">Mitochondrion inner membrane</location>
        <topology evidence="1">Multi-pass membrane protein</topology>
    </subcellularLocation>
</comment>
<comment type="similarity">
    <text evidence="3">Belongs to the cytochrome c oxidase subunit 3 family.</text>
</comment>
<reference key="1">
    <citation type="journal article" date="1997" name="Proc. Natl. Acad. Sci. U.S.A.">
        <title>The complete mitochondrial genome of the wallaroo (Macropus robustus) and the phylogenetic relationship among Monotremata, Marsupialia, and Eutheria.</title>
        <authorList>
            <person name="Janke A."/>
            <person name="Xu X."/>
            <person name="Arnason U."/>
        </authorList>
    </citation>
    <scope>NUCLEOTIDE SEQUENCE [GENOMIC DNA]</scope>
</reference>
<evidence type="ECO:0000250" key="1">
    <source>
        <dbReference type="UniProtKB" id="P00415"/>
    </source>
</evidence>
<evidence type="ECO:0000250" key="2">
    <source>
        <dbReference type="UniProtKB" id="P00420"/>
    </source>
</evidence>
<evidence type="ECO:0000305" key="3"/>
<gene>
    <name type="primary">MT-CO3</name>
    <name type="synonym">COIII</name>
    <name type="synonym">COXIII</name>
    <name type="synonym">MTCO3</name>
</gene>
<protein>
    <recommendedName>
        <fullName>Cytochrome c oxidase subunit 3</fullName>
        <ecNumber>7.1.1.9</ecNumber>
    </recommendedName>
    <alternativeName>
        <fullName>Cytochrome c oxidase polypeptide III</fullName>
    </alternativeName>
</protein>
<dbReference type="EC" id="7.1.1.9"/>
<dbReference type="EMBL" id="Y10524">
    <property type="protein sequence ID" value="CAA71542.1"/>
    <property type="molecule type" value="Genomic_DNA"/>
</dbReference>
<dbReference type="PIR" id="T11434">
    <property type="entry name" value="T11434"/>
</dbReference>
<dbReference type="RefSeq" id="NP_007400.1">
    <property type="nucleotide sequence ID" value="NC_001794.1"/>
</dbReference>
<dbReference type="SMR" id="P92665"/>
<dbReference type="GeneID" id="808079"/>
<dbReference type="CTD" id="4514"/>
<dbReference type="GO" id="GO:0005743">
    <property type="term" value="C:mitochondrial inner membrane"/>
    <property type="evidence" value="ECO:0007669"/>
    <property type="project" value="UniProtKB-SubCell"/>
</dbReference>
<dbReference type="GO" id="GO:0045277">
    <property type="term" value="C:respiratory chain complex IV"/>
    <property type="evidence" value="ECO:0000250"/>
    <property type="project" value="UniProtKB"/>
</dbReference>
<dbReference type="GO" id="GO:0004129">
    <property type="term" value="F:cytochrome-c oxidase activity"/>
    <property type="evidence" value="ECO:0007669"/>
    <property type="project" value="UniProtKB-EC"/>
</dbReference>
<dbReference type="GO" id="GO:0006123">
    <property type="term" value="P:mitochondrial electron transport, cytochrome c to oxygen"/>
    <property type="evidence" value="ECO:0007669"/>
    <property type="project" value="TreeGrafter"/>
</dbReference>
<dbReference type="GO" id="GO:0008535">
    <property type="term" value="P:respiratory chain complex IV assembly"/>
    <property type="evidence" value="ECO:0000250"/>
    <property type="project" value="UniProtKB"/>
</dbReference>
<dbReference type="CDD" id="cd01665">
    <property type="entry name" value="Cyt_c_Oxidase_III"/>
    <property type="match status" value="1"/>
</dbReference>
<dbReference type="FunFam" id="1.10.287.70:FF:000048">
    <property type="entry name" value="Cytochrome c oxidase subunit 3"/>
    <property type="match status" value="1"/>
</dbReference>
<dbReference type="FunFam" id="1.20.120.80:FF:000002">
    <property type="entry name" value="Cytochrome c oxidase subunit 3"/>
    <property type="match status" value="1"/>
</dbReference>
<dbReference type="Gene3D" id="1.10.287.70">
    <property type="match status" value="1"/>
</dbReference>
<dbReference type="Gene3D" id="1.20.120.80">
    <property type="entry name" value="Cytochrome c oxidase, subunit III, four-helix bundle"/>
    <property type="match status" value="1"/>
</dbReference>
<dbReference type="InterPro" id="IPR024791">
    <property type="entry name" value="Cyt_c/ubiquinol_Oxase_su3"/>
</dbReference>
<dbReference type="InterPro" id="IPR033945">
    <property type="entry name" value="Cyt_c_oxase_su3_dom"/>
</dbReference>
<dbReference type="InterPro" id="IPR000298">
    <property type="entry name" value="Cyt_c_oxidase-like_su3"/>
</dbReference>
<dbReference type="InterPro" id="IPR035973">
    <property type="entry name" value="Cyt_c_oxidase_su3-like_sf"/>
</dbReference>
<dbReference type="InterPro" id="IPR013833">
    <property type="entry name" value="Cyt_c_oxidase_su3_a-hlx"/>
</dbReference>
<dbReference type="PANTHER" id="PTHR11403:SF7">
    <property type="entry name" value="CYTOCHROME C OXIDASE SUBUNIT 3"/>
    <property type="match status" value="1"/>
</dbReference>
<dbReference type="PANTHER" id="PTHR11403">
    <property type="entry name" value="CYTOCHROME C OXIDASE SUBUNIT III"/>
    <property type="match status" value="1"/>
</dbReference>
<dbReference type="Pfam" id="PF00510">
    <property type="entry name" value="COX3"/>
    <property type="match status" value="1"/>
</dbReference>
<dbReference type="SUPFAM" id="SSF81452">
    <property type="entry name" value="Cytochrome c oxidase subunit III-like"/>
    <property type="match status" value="1"/>
</dbReference>
<dbReference type="PROSITE" id="PS50253">
    <property type="entry name" value="COX3"/>
    <property type="match status" value="1"/>
</dbReference>
<feature type="chain" id="PRO_0000183803" description="Cytochrome c oxidase subunit 3">
    <location>
        <begin position="1"/>
        <end position="261"/>
    </location>
</feature>
<feature type="topological domain" description="Mitochondrial matrix" evidence="1">
    <location>
        <begin position="1"/>
        <end position="15"/>
    </location>
</feature>
<feature type="transmembrane region" description="Helical; Name=I" evidence="1">
    <location>
        <begin position="16"/>
        <end position="34"/>
    </location>
</feature>
<feature type="topological domain" description="Mitochondrial intermembrane" evidence="1">
    <location>
        <begin position="35"/>
        <end position="40"/>
    </location>
</feature>
<feature type="transmembrane region" description="Helical; Name=II" evidence="1">
    <location>
        <begin position="41"/>
        <end position="66"/>
    </location>
</feature>
<feature type="topological domain" description="Mitochondrial matrix" evidence="1">
    <location>
        <begin position="67"/>
        <end position="72"/>
    </location>
</feature>
<feature type="transmembrane region" description="Helical; Name=III" evidence="1">
    <location>
        <begin position="73"/>
        <end position="105"/>
    </location>
</feature>
<feature type="topological domain" description="Mitochondrial intermembrane" evidence="1">
    <location>
        <begin position="106"/>
        <end position="128"/>
    </location>
</feature>
<feature type="transmembrane region" description="Helical; Name=IV" evidence="1">
    <location>
        <begin position="129"/>
        <end position="152"/>
    </location>
</feature>
<feature type="topological domain" description="Mitochondrial matrix" evidence="1">
    <location>
        <begin position="153"/>
        <end position="155"/>
    </location>
</feature>
<feature type="transmembrane region" description="Helical; Name=V" evidence="1">
    <location>
        <begin position="156"/>
        <end position="183"/>
    </location>
</feature>
<feature type="topological domain" description="Mitochondrial intermembrane" evidence="1">
    <location>
        <begin position="184"/>
        <end position="190"/>
    </location>
</feature>
<feature type="transmembrane region" description="Helical; Name=VI" evidence="1">
    <location>
        <begin position="191"/>
        <end position="223"/>
    </location>
</feature>
<feature type="topological domain" description="Mitochondrial matrix" evidence="1">
    <location>
        <begin position="224"/>
        <end position="232"/>
    </location>
</feature>
<feature type="transmembrane region" description="Helical; Name=VII" evidence="1">
    <location>
        <begin position="233"/>
        <end position="256"/>
    </location>
</feature>
<feature type="topological domain" description="Mitochondrial intermembrane" evidence="1">
    <location>
        <begin position="257"/>
        <end position="261"/>
    </location>
</feature>
<name>COX3_OSPRO</name>
<organism>
    <name type="scientific">Osphranter robustus</name>
    <name type="common">Wallaroo</name>
    <name type="synonym">Macropus robustus</name>
    <dbReference type="NCBI Taxonomy" id="9319"/>
    <lineage>
        <taxon>Eukaryota</taxon>
        <taxon>Metazoa</taxon>
        <taxon>Chordata</taxon>
        <taxon>Craniata</taxon>
        <taxon>Vertebrata</taxon>
        <taxon>Euteleostomi</taxon>
        <taxon>Mammalia</taxon>
        <taxon>Metatheria</taxon>
        <taxon>Diprotodontia</taxon>
        <taxon>Macropodidae</taxon>
        <taxon>Osphranter</taxon>
    </lineage>
</organism>